<proteinExistence type="inferred from homology"/>
<organism>
    <name type="scientific">Clostridium tetani (strain Massachusetts / E88)</name>
    <dbReference type="NCBI Taxonomy" id="212717"/>
    <lineage>
        <taxon>Bacteria</taxon>
        <taxon>Bacillati</taxon>
        <taxon>Bacillota</taxon>
        <taxon>Clostridia</taxon>
        <taxon>Eubacteriales</taxon>
        <taxon>Clostridiaceae</taxon>
        <taxon>Clostridium</taxon>
    </lineage>
</organism>
<feature type="chain" id="PRO_0000170026" description="LexA repressor">
    <location>
        <begin position="1"/>
        <end position="200"/>
    </location>
</feature>
<feature type="DNA-binding region" description="H-T-H motif" evidence="1">
    <location>
        <begin position="27"/>
        <end position="47"/>
    </location>
</feature>
<feature type="active site" description="For autocatalytic cleavage activity" evidence="1">
    <location>
        <position position="124"/>
    </location>
</feature>
<feature type="active site" description="For autocatalytic cleavage activity" evidence="1">
    <location>
        <position position="161"/>
    </location>
</feature>
<feature type="site" description="Cleavage; by autolysis" evidence="1">
    <location>
        <begin position="88"/>
        <end position="89"/>
    </location>
</feature>
<protein>
    <recommendedName>
        <fullName evidence="1">LexA repressor</fullName>
        <ecNumber evidence="1">3.4.21.88</ecNumber>
    </recommendedName>
</protein>
<evidence type="ECO:0000255" key="1">
    <source>
        <dbReference type="HAMAP-Rule" id="MF_00015"/>
    </source>
</evidence>
<accession>Q895H6</accession>
<name>LEXA_CLOTE</name>
<keyword id="KW-0068">Autocatalytic cleavage</keyword>
<keyword id="KW-0227">DNA damage</keyword>
<keyword id="KW-0234">DNA repair</keyword>
<keyword id="KW-0235">DNA replication</keyword>
<keyword id="KW-0238">DNA-binding</keyword>
<keyword id="KW-0378">Hydrolase</keyword>
<keyword id="KW-1185">Reference proteome</keyword>
<keyword id="KW-0678">Repressor</keyword>
<keyword id="KW-0742">SOS response</keyword>
<keyword id="KW-0804">Transcription</keyword>
<keyword id="KW-0805">Transcription regulation</keyword>
<sequence>MARQNKQEAIYEFIKEQLREKGYPPSVREICNAVELRSTSTVHGHLKRLEEKGVIRRDPTKPRAIEVLEHSIMKKEMVDIPVVGTVTAGKPILAVENIEDTFALPINYVRNKKQLFALKIKGDSMIDTGILDGDLAIVEKNNSVLNGEIVVALLGDRATVKRFFKEKDYIRLQPENETMEPIIVKQCEIIGKVVGVYRKY</sequence>
<gene>
    <name evidence="1" type="primary">lexA</name>
    <name type="ordered locus">CTC_01298</name>
</gene>
<dbReference type="EC" id="3.4.21.88" evidence="1"/>
<dbReference type="EMBL" id="AE015927">
    <property type="protein sequence ID" value="AAO35864.1"/>
    <property type="molecule type" value="Genomic_DNA"/>
</dbReference>
<dbReference type="RefSeq" id="WP_011099526.1">
    <property type="nucleotide sequence ID" value="NC_004557.1"/>
</dbReference>
<dbReference type="SMR" id="Q895H6"/>
<dbReference type="STRING" id="212717.CTC_01298"/>
<dbReference type="MEROPS" id="S24.001"/>
<dbReference type="GeneID" id="24253932"/>
<dbReference type="KEGG" id="ctc:CTC_01298"/>
<dbReference type="HOGENOM" id="CLU_066192_45_1_9"/>
<dbReference type="OrthoDB" id="9802364at2"/>
<dbReference type="Proteomes" id="UP000001412">
    <property type="component" value="Chromosome"/>
</dbReference>
<dbReference type="GO" id="GO:0003677">
    <property type="term" value="F:DNA binding"/>
    <property type="evidence" value="ECO:0007669"/>
    <property type="project" value="UniProtKB-UniRule"/>
</dbReference>
<dbReference type="GO" id="GO:0004252">
    <property type="term" value="F:serine-type endopeptidase activity"/>
    <property type="evidence" value="ECO:0007669"/>
    <property type="project" value="UniProtKB-UniRule"/>
</dbReference>
<dbReference type="GO" id="GO:0006281">
    <property type="term" value="P:DNA repair"/>
    <property type="evidence" value="ECO:0007669"/>
    <property type="project" value="UniProtKB-UniRule"/>
</dbReference>
<dbReference type="GO" id="GO:0006260">
    <property type="term" value="P:DNA replication"/>
    <property type="evidence" value="ECO:0007669"/>
    <property type="project" value="UniProtKB-UniRule"/>
</dbReference>
<dbReference type="GO" id="GO:0045892">
    <property type="term" value="P:negative regulation of DNA-templated transcription"/>
    <property type="evidence" value="ECO:0007669"/>
    <property type="project" value="UniProtKB-UniRule"/>
</dbReference>
<dbReference type="GO" id="GO:0006508">
    <property type="term" value="P:proteolysis"/>
    <property type="evidence" value="ECO:0007669"/>
    <property type="project" value="InterPro"/>
</dbReference>
<dbReference type="GO" id="GO:0009432">
    <property type="term" value="P:SOS response"/>
    <property type="evidence" value="ECO:0007669"/>
    <property type="project" value="UniProtKB-UniRule"/>
</dbReference>
<dbReference type="CDD" id="cd00090">
    <property type="entry name" value="HTH_ARSR"/>
    <property type="match status" value="1"/>
</dbReference>
<dbReference type="CDD" id="cd06529">
    <property type="entry name" value="S24_LexA-like"/>
    <property type="match status" value="1"/>
</dbReference>
<dbReference type="FunFam" id="1.10.10.10:FF:000009">
    <property type="entry name" value="LexA repressor"/>
    <property type="match status" value="1"/>
</dbReference>
<dbReference type="FunFam" id="2.10.109.10:FF:000001">
    <property type="entry name" value="LexA repressor"/>
    <property type="match status" value="1"/>
</dbReference>
<dbReference type="Gene3D" id="2.10.109.10">
    <property type="entry name" value="Umud Fragment, subunit A"/>
    <property type="match status" value="1"/>
</dbReference>
<dbReference type="Gene3D" id="1.10.10.10">
    <property type="entry name" value="Winged helix-like DNA-binding domain superfamily/Winged helix DNA-binding domain"/>
    <property type="match status" value="1"/>
</dbReference>
<dbReference type="HAMAP" id="MF_00015">
    <property type="entry name" value="LexA"/>
    <property type="match status" value="1"/>
</dbReference>
<dbReference type="InterPro" id="IPR011991">
    <property type="entry name" value="ArsR-like_HTH"/>
</dbReference>
<dbReference type="InterPro" id="IPR006200">
    <property type="entry name" value="LexA"/>
</dbReference>
<dbReference type="InterPro" id="IPR039418">
    <property type="entry name" value="LexA-like"/>
</dbReference>
<dbReference type="InterPro" id="IPR036286">
    <property type="entry name" value="LexA/Signal_pep-like_sf"/>
</dbReference>
<dbReference type="InterPro" id="IPR006199">
    <property type="entry name" value="LexA_DNA-bd_dom"/>
</dbReference>
<dbReference type="InterPro" id="IPR050077">
    <property type="entry name" value="LexA_repressor"/>
</dbReference>
<dbReference type="InterPro" id="IPR006197">
    <property type="entry name" value="Peptidase_S24_LexA"/>
</dbReference>
<dbReference type="InterPro" id="IPR015927">
    <property type="entry name" value="Peptidase_S24_S26A/B/C"/>
</dbReference>
<dbReference type="InterPro" id="IPR036388">
    <property type="entry name" value="WH-like_DNA-bd_sf"/>
</dbReference>
<dbReference type="InterPro" id="IPR036390">
    <property type="entry name" value="WH_DNA-bd_sf"/>
</dbReference>
<dbReference type="NCBIfam" id="TIGR00498">
    <property type="entry name" value="lexA"/>
    <property type="match status" value="1"/>
</dbReference>
<dbReference type="PANTHER" id="PTHR33516">
    <property type="entry name" value="LEXA REPRESSOR"/>
    <property type="match status" value="1"/>
</dbReference>
<dbReference type="PANTHER" id="PTHR33516:SF2">
    <property type="entry name" value="LEXA REPRESSOR-RELATED"/>
    <property type="match status" value="1"/>
</dbReference>
<dbReference type="Pfam" id="PF01726">
    <property type="entry name" value="LexA_DNA_bind"/>
    <property type="match status" value="1"/>
</dbReference>
<dbReference type="Pfam" id="PF00717">
    <property type="entry name" value="Peptidase_S24"/>
    <property type="match status" value="1"/>
</dbReference>
<dbReference type="PRINTS" id="PR00726">
    <property type="entry name" value="LEXASERPTASE"/>
</dbReference>
<dbReference type="SUPFAM" id="SSF51306">
    <property type="entry name" value="LexA/Signal peptidase"/>
    <property type="match status" value="1"/>
</dbReference>
<dbReference type="SUPFAM" id="SSF46785">
    <property type="entry name" value="Winged helix' DNA-binding domain"/>
    <property type="match status" value="1"/>
</dbReference>
<comment type="function">
    <text evidence="1">Represses a number of genes involved in the response to DNA damage (SOS response), including recA and lexA. In the presence of single-stranded DNA, RecA interacts with LexA causing an autocatalytic cleavage which disrupts the DNA-binding part of LexA, leading to derepression of the SOS regulon and eventually DNA repair.</text>
</comment>
<comment type="catalytic activity">
    <reaction evidence="1">
        <text>Hydrolysis of Ala-|-Gly bond in repressor LexA.</text>
        <dbReference type="EC" id="3.4.21.88"/>
    </reaction>
</comment>
<comment type="subunit">
    <text evidence="1">Homodimer.</text>
</comment>
<comment type="similarity">
    <text evidence="1">Belongs to the peptidase S24 family.</text>
</comment>
<reference key="1">
    <citation type="journal article" date="2003" name="Proc. Natl. Acad. Sci. U.S.A.">
        <title>The genome sequence of Clostridium tetani, the causative agent of tetanus disease.</title>
        <authorList>
            <person name="Brueggemann H."/>
            <person name="Baeumer S."/>
            <person name="Fricke W.F."/>
            <person name="Wiezer A."/>
            <person name="Liesegang H."/>
            <person name="Decker I."/>
            <person name="Herzberg C."/>
            <person name="Martinez-Arias R."/>
            <person name="Merkl R."/>
            <person name="Henne A."/>
            <person name="Gottschalk G."/>
        </authorList>
    </citation>
    <scope>NUCLEOTIDE SEQUENCE [LARGE SCALE GENOMIC DNA]</scope>
    <source>
        <strain>Massachusetts / E88</strain>
    </source>
</reference>